<proteinExistence type="predicted"/>
<sequence length="26" mass="2712">MPEQKANCSPNGNITVDSMIMSLGSS</sequence>
<organism>
    <name type="scientific">Saccharomyces cerevisiae (strain ATCC 204508 / S288c)</name>
    <name type="common">Baker's yeast</name>
    <dbReference type="NCBI Taxonomy" id="559292"/>
    <lineage>
        <taxon>Eukaryota</taxon>
        <taxon>Fungi</taxon>
        <taxon>Dikarya</taxon>
        <taxon>Ascomycota</taxon>
        <taxon>Saccharomycotina</taxon>
        <taxon>Saccharomycetes</taxon>
        <taxon>Saccharomycetales</taxon>
        <taxon>Saccharomycetaceae</taxon>
        <taxon>Saccharomyces</taxon>
    </lineage>
</organism>
<keyword id="KW-1185">Reference proteome</keyword>
<protein>
    <recommendedName>
        <fullName evidence="3">Uncharacterized protein YNL040C-A</fullName>
    </recommendedName>
</protein>
<reference key="1">
    <citation type="journal article" date="1997" name="Nature">
        <title>The nucleotide sequence of Saccharomyces cerevisiae chromosome XIV and its evolutionary implications.</title>
        <authorList>
            <person name="Philippsen P."/>
            <person name="Kleine K."/>
            <person name="Poehlmann R."/>
            <person name="Duesterhoeft A."/>
            <person name="Hamberg K."/>
            <person name="Hegemann J.H."/>
            <person name="Obermaier B."/>
            <person name="Urrestarazu L.A."/>
            <person name="Aert R."/>
            <person name="Albermann K."/>
            <person name="Altmann R."/>
            <person name="Andre B."/>
            <person name="Baladron V."/>
            <person name="Ballesta J.P.G."/>
            <person name="Becam A.-M."/>
            <person name="Beinhauer J.D."/>
            <person name="Boskovic J."/>
            <person name="Buitrago M.J."/>
            <person name="Bussereau F."/>
            <person name="Coster F."/>
            <person name="Crouzet M."/>
            <person name="D'Angelo M."/>
            <person name="Dal Pero F."/>
            <person name="De Antoni A."/>
            <person name="del Rey F."/>
            <person name="Doignon F."/>
            <person name="Domdey H."/>
            <person name="Dubois E."/>
            <person name="Fiedler T.A."/>
            <person name="Fleig U."/>
            <person name="Floeth M."/>
            <person name="Fritz C."/>
            <person name="Gaillardin C."/>
            <person name="Garcia-Cantalejo J.M."/>
            <person name="Glansdorff N."/>
            <person name="Goffeau A."/>
            <person name="Gueldener U."/>
            <person name="Herbert C.J."/>
            <person name="Heumann K."/>
            <person name="Heuss-Neitzel D."/>
            <person name="Hilbert H."/>
            <person name="Hinni K."/>
            <person name="Iraqui Houssaini I."/>
            <person name="Jacquet M."/>
            <person name="Jimenez A."/>
            <person name="Jonniaux J.-L."/>
            <person name="Karpfinger-Hartl L."/>
            <person name="Lanfranchi G."/>
            <person name="Lepingle A."/>
            <person name="Levesque H."/>
            <person name="Lyck R."/>
            <person name="Maftahi M."/>
            <person name="Mallet L."/>
            <person name="Maurer C.T.C."/>
            <person name="Messenguy F."/>
            <person name="Mewes H.-W."/>
            <person name="Moestl D."/>
            <person name="Nasr F."/>
            <person name="Nicaud J.-M."/>
            <person name="Niedenthal R.K."/>
            <person name="Pandolfo D."/>
            <person name="Pierard A."/>
            <person name="Piravandi E."/>
            <person name="Planta R.J."/>
            <person name="Pohl T.M."/>
            <person name="Purnelle B."/>
            <person name="Rebischung C."/>
            <person name="Remacha M.A."/>
            <person name="Revuelta J.L."/>
            <person name="Rinke M."/>
            <person name="Saiz J.E."/>
            <person name="Sartorello F."/>
            <person name="Scherens B."/>
            <person name="Sen-Gupta M."/>
            <person name="Soler-Mira A."/>
            <person name="Urbanus J.H.M."/>
            <person name="Valle G."/>
            <person name="Van Dyck L."/>
            <person name="Verhasselt P."/>
            <person name="Vierendeels F."/>
            <person name="Vissers S."/>
            <person name="Voet M."/>
            <person name="Volckaert G."/>
            <person name="Wach A."/>
            <person name="Wambutt R."/>
            <person name="Wedler H."/>
            <person name="Zollner A."/>
            <person name="Hani J."/>
        </authorList>
    </citation>
    <scope>NUCLEOTIDE SEQUENCE [LARGE SCALE GENOMIC DNA]</scope>
    <source>
        <strain>ATCC 204508 / S288c</strain>
    </source>
</reference>
<reference key="2">
    <citation type="journal article" date="2014" name="G3 (Bethesda)">
        <title>The reference genome sequence of Saccharomyces cerevisiae: Then and now.</title>
        <authorList>
            <person name="Engel S.R."/>
            <person name="Dietrich F.S."/>
            <person name="Fisk D.G."/>
            <person name="Binkley G."/>
            <person name="Balakrishnan R."/>
            <person name="Costanzo M.C."/>
            <person name="Dwight S.S."/>
            <person name="Hitz B.C."/>
            <person name="Karra K."/>
            <person name="Nash R.S."/>
            <person name="Weng S."/>
            <person name="Wong E.D."/>
            <person name="Lloyd P."/>
            <person name="Skrzypek M.S."/>
            <person name="Miyasato S.R."/>
            <person name="Simison M."/>
            <person name="Cherry J.M."/>
        </authorList>
    </citation>
    <scope>GENOME REANNOTATION</scope>
    <source>
        <strain>ATCC 204508 / S288c</strain>
    </source>
</reference>
<reference key="3">
    <citation type="journal article" date="2022" name="Genetics">
        <title>New data and collaborations at the Saccharomyces Genome Database: updated reference genome, alleles, and the Alliance of Genome Resources.</title>
        <authorList>
            <person name="Engel S.R."/>
            <person name="Wong E.D."/>
            <person name="Nash R.S."/>
            <person name="Aleksander S."/>
            <person name="Alexander M."/>
            <person name="Douglass E."/>
            <person name="Karra K."/>
            <person name="Miyasato S.R."/>
            <person name="Simison M."/>
            <person name="Skrzypek M.S."/>
            <person name="Weng S."/>
            <person name="Cherry J.M."/>
        </authorList>
    </citation>
    <scope>GENOME REANNOTATION</scope>
    <source>
        <strain>ATCC 204508 / S288c</strain>
    </source>
</reference>
<reference key="4">
    <citation type="journal article" date="2023" name="Cell Syst.">
        <title>A vast evolutionarily transient translatome contributes to phenotype and fitness.</title>
        <authorList>
            <person name="Wacholder A."/>
            <person name="Parikh S.B."/>
            <person name="Coelho N.C."/>
            <person name="Acar O."/>
            <person name="Houghton C."/>
            <person name="Chou L."/>
            <person name="Carvunis A.R."/>
        </authorList>
    </citation>
    <scope>IDENTIFICATION</scope>
    <scope>DISRUPTION PHENOTYPE</scope>
</reference>
<gene>
    <name evidence="4" type="ordered locus">YNL040C-A</name>
</gene>
<accession>P9WEJ1</accession>
<accession>A0AAT9JA86</accession>
<evidence type="ECO:0000256" key="1">
    <source>
        <dbReference type="SAM" id="MobiDB-lite"/>
    </source>
</evidence>
<evidence type="ECO:0000269" key="2">
    <source>
    </source>
</evidence>
<evidence type="ECO:0000305" key="3"/>
<evidence type="ECO:0000312" key="4">
    <source>
        <dbReference type="SGD" id="S000350098"/>
    </source>
</evidence>
<name>YN040_YEAST</name>
<dbReference type="EMBL" id="BK006947">
    <property type="protein sequence ID" value="DBA54443.1"/>
    <property type="molecule type" value="Genomic_DNA"/>
</dbReference>
<dbReference type="RefSeq" id="NP_001418072.1">
    <property type="nucleotide sequence ID" value="NM_001431143.1"/>
</dbReference>
<dbReference type="GeneID" id="91000625"/>
<dbReference type="SGD" id="S000350098">
    <property type="gene designation" value="YNL040C-A"/>
</dbReference>
<dbReference type="Proteomes" id="UP000002311">
    <property type="component" value="Chromosome XIV"/>
</dbReference>
<comment type="disruption phenotype">
    <text evidence="2">Confers sensitivity to osmotic stress.</text>
</comment>
<feature type="chain" id="PRO_0000461176" description="Uncharacterized protein YNL040C-A">
    <location>
        <begin position="1"/>
        <end position="26"/>
    </location>
</feature>
<feature type="region of interest" description="Disordered" evidence="1">
    <location>
        <begin position="1"/>
        <end position="26"/>
    </location>
</feature>
<feature type="compositionally biased region" description="Polar residues" evidence="1">
    <location>
        <begin position="1"/>
        <end position="16"/>
    </location>
</feature>